<feature type="chain" id="PRO_0000057695" description="Xylosidase/arabinosidase">
    <location>
        <begin position="1"/>
        <end position="473"/>
    </location>
</feature>
<feature type="active site" description="Proton acceptor" evidence="1">
    <location>
        <position position="18"/>
    </location>
</feature>
<feature type="active site" description="Proton donor" evidence="1">
    <location>
        <position position="209"/>
    </location>
</feature>
<feature type="site" description="Important for catalytic activity, responsible for pKa modulation of the active site Glu and correct orientation of both the proton donor and substrate" evidence="1">
    <location>
        <position position="144"/>
    </location>
</feature>
<proteinExistence type="evidence at protein level"/>
<comment type="catalytic activity">
    <reaction>
        <text>Hydrolysis of (1-&gt;4)-beta-D-xylans, to remove successive D-xylose residues from the non-reducing termini.</text>
        <dbReference type="EC" id="3.2.1.37"/>
    </reaction>
</comment>
<comment type="catalytic activity">
    <reaction>
        <text>Hydrolysis of terminal non-reducing alpha-L-arabinofuranoside residues in alpha-L-arabinosides.</text>
        <dbReference type="EC" id="3.2.1.55"/>
    </reaction>
</comment>
<comment type="subunit">
    <text>Homotetramer.</text>
</comment>
<comment type="similarity">
    <text evidence="2">Belongs to the glycosyl hydrolase 43 family.</text>
</comment>
<name>XYLA_THEST</name>
<reference key="1">
    <citation type="journal article" date="1993" name="Biosci. Biotechnol. Biochem.">
        <title>Nucleotide sequence of the Clostridium stercorarium xylA gene encoding a bifunctional protein with beta-D-xylosidase and alpha-L-arabinofuranosidase activities, and properties of the translated product.</title>
        <authorList>
            <person name="Sakka K."/>
            <person name="Yoshikawa K."/>
            <person name="Kojima Y."/>
            <person name="Karita S."/>
            <person name="Ohmiya K."/>
            <person name="Shimada K."/>
        </authorList>
    </citation>
    <scope>NUCLEOTIDE SEQUENCE [GENOMIC DNA]</scope>
    <scope>PARTIAL PROTEIN SEQUENCE</scope>
</reference>
<accession>P48790</accession>
<organism>
    <name type="scientific">Thermoclostridium stercorarium</name>
    <name type="common">Clostridium stercorarium</name>
    <dbReference type="NCBI Taxonomy" id="1510"/>
    <lineage>
        <taxon>Bacteria</taxon>
        <taxon>Bacillati</taxon>
        <taxon>Bacillota</taxon>
        <taxon>Clostridia</taxon>
        <taxon>Eubacteriales</taxon>
        <taxon>Oscillospiraceae</taxon>
        <taxon>Thermoclostridium</taxon>
    </lineage>
</organism>
<protein>
    <recommendedName>
        <fullName>Xylosidase/arabinosidase</fullName>
    </recommendedName>
    <domain>
        <recommendedName>
            <fullName>Beta-xylosidase</fullName>
            <ecNumber>3.2.1.37</ecNumber>
        </recommendedName>
        <alternativeName>
            <fullName>1,4-beta-D-xylan xylohydrolase</fullName>
        </alternativeName>
        <alternativeName>
            <fullName>Xylan 1,4-beta-xylosidase</fullName>
        </alternativeName>
    </domain>
    <domain>
        <recommendedName>
            <fullName>Alpha-L-arabinofuranosidase</fullName>
            <shortName>Arabinosidase</shortName>
            <ecNumber>3.2.1.55</ecNumber>
        </recommendedName>
    </domain>
</protein>
<keyword id="KW-0119">Carbohydrate metabolism</keyword>
<keyword id="KW-0903">Direct protein sequencing</keyword>
<keyword id="KW-0326">Glycosidase</keyword>
<keyword id="KW-0378">Hydrolase</keyword>
<keyword id="KW-0511">Multifunctional enzyme</keyword>
<keyword id="KW-0624">Polysaccharide degradation</keyword>
<keyword id="KW-0858">Xylan degradation</keyword>
<sequence>MRKQRFNPYLPSWEYIPDAEPYVFNGRVYIYGSHDRFNGHAFCLNDYVCWSAPVDDLSEWRYEGVIYRKTDDPLNPDGRMCLYAPDVTLGPDGRYYLYYVLDKVPVVSVAVCDTPAGKYEFYGYVRYADGTRLGEREGDWPQFDPAVLTEGERTYLYTGFCPKGDKSRKGAMATVLGPDMLTVVEEPVIIVPSEPYSRGSGFEGHEFFEAPSIRKKGDTYYFIYSSVVMHELCYATSKHPTKGFKYGGVIVSNCDLHIDSYKPAEKPMYYGGNNHGSIVEINGEWYIFYHRHTNGTSFSRQGCMEKIKILEDGSIPQVEMTSCGSADEPLPGRGEYPAYIACNLFCGEESVYTDLTGAWMNNQFPKITQDGKDGDEEPGYIANMKDSATAGFKYFDCKGIKSVKIKVRGYCRGVFEVKTSWNGEVLGKIPVEFSNIWTEFSASIPIPDGIHALYFTYRGSGSASLKSFTLCTD</sequence>
<gene>
    <name type="primary">xylA</name>
</gene>
<dbReference type="EC" id="3.2.1.37"/>
<dbReference type="EC" id="3.2.1.55"/>
<dbReference type="EMBL" id="D13268">
    <property type="protein sequence ID" value="BAA02527.1"/>
    <property type="molecule type" value="Genomic_DNA"/>
</dbReference>
<dbReference type="PIR" id="JQ1936">
    <property type="entry name" value="JQ1936"/>
</dbReference>
<dbReference type="RefSeq" id="WP_015358576.1">
    <property type="nucleotide sequence ID" value="NZ_CP110889.1"/>
</dbReference>
<dbReference type="SMR" id="P48790"/>
<dbReference type="CAZy" id="GH43">
    <property type="family name" value="Glycoside Hydrolase Family 43"/>
</dbReference>
<dbReference type="GO" id="GO:0046556">
    <property type="term" value="F:alpha-L-arabinofuranosidase activity"/>
    <property type="evidence" value="ECO:0007669"/>
    <property type="project" value="UniProtKB-EC"/>
</dbReference>
<dbReference type="GO" id="GO:0009044">
    <property type="term" value="F:xylan 1,4-beta-xylosidase activity"/>
    <property type="evidence" value="ECO:0007669"/>
    <property type="project" value="UniProtKB-EC"/>
</dbReference>
<dbReference type="GO" id="GO:0045493">
    <property type="term" value="P:xylan catabolic process"/>
    <property type="evidence" value="ECO:0007669"/>
    <property type="project" value="UniProtKB-KW"/>
</dbReference>
<dbReference type="CDD" id="cd04084">
    <property type="entry name" value="CBM6_xylanase-like"/>
    <property type="match status" value="1"/>
</dbReference>
<dbReference type="CDD" id="cd18620">
    <property type="entry name" value="GH43_XylA-like"/>
    <property type="match status" value="1"/>
</dbReference>
<dbReference type="Gene3D" id="2.60.120.260">
    <property type="entry name" value="Galactose-binding domain-like"/>
    <property type="match status" value="1"/>
</dbReference>
<dbReference type="Gene3D" id="2.115.10.20">
    <property type="entry name" value="Glycosyl hydrolase domain, family 43"/>
    <property type="match status" value="1"/>
</dbReference>
<dbReference type="InterPro" id="IPR006710">
    <property type="entry name" value="Glyco_hydro_43"/>
</dbReference>
<dbReference type="InterPro" id="IPR023296">
    <property type="entry name" value="Glyco_hydro_beta-prop_sf"/>
</dbReference>
<dbReference type="InterPro" id="IPR052176">
    <property type="entry name" value="Glycosyl_Hydrlase_43_Enz"/>
</dbReference>
<dbReference type="PANTHER" id="PTHR43772">
    <property type="entry name" value="ENDO-1,4-BETA-XYLANASE"/>
    <property type="match status" value="1"/>
</dbReference>
<dbReference type="PANTHER" id="PTHR43772:SF2">
    <property type="entry name" value="PUTATIVE (AFU_ORTHOLOGUE AFUA_2G04480)-RELATED"/>
    <property type="match status" value="1"/>
</dbReference>
<dbReference type="Pfam" id="PF04616">
    <property type="entry name" value="Glyco_hydro_43"/>
    <property type="match status" value="1"/>
</dbReference>
<dbReference type="SUPFAM" id="SSF75005">
    <property type="entry name" value="Arabinanase/levansucrase/invertase"/>
    <property type="match status" value="1"/>
</dbReference>
<evidence type="ECO:0000250" key="1">
    <source>
        <dbReference type="UniProtKB" id="Q45071"/>
    </source>
</evidence>
<evidence type="ECO:0000305" key="2"/>